<name>PA2A1_NAJKA</name>
<evidence type="ECO:0000250" key="1"/>
<evidence type="ECO:0000255" key="2"/>
<evidence type="ECO:0000255" key="3">
    <source>
        <dbReference type="PROSITE-ProRule" id="PRU10035"/>
    </source>
</evidence>
<evidence type="ECO:0000255" key="4">
    <source>
        <dbReference type="PROSITE-ProRule" id="PRU10036"/>
    </source>
</evidence>
<evidence type="ECO:0000269" key="5">
    <source>
    </source>
</evidence>
<evidence type="ECO:0000269" key="6">
    <source>
    </source>
</evidence>
<evidence type="ECO:0000269" key="7">
    <source>
    </source>
</evidence>
<evidence type="ECO:0000303" key="8">
    <source>
    </source>
</evidence>
<evidence type="ECO:0000303" key="9">
    <source>
    </source>
</evidence>
<evidence type="ECO:0000303" key="10">
    <source>
    </source>
</evidence>
<evidence type="ECO:0000305" key="11"/>
<evidence type="ECO:0000305" key="12">
    <source>
    </source>
</evidence>
<evidence type="ECO:0000305" key="13">
    <source>
    </source>
</evidence>
<protein>
    <recommendedName>
        <fullName evidence="8 10">Acidic phospholipase A2 CM-II</fullName>
        <shortName evidence="9">CM 2</shortName>
        <shortName>svPLA2</shortName>
        <ecNumber>3.1.1.4</ecNumber>
    </recommendedName>
    <alternativeName>
        <fullName>Acidic phospholipase A2 1</fullName>
    </alternativeName>
    <alternativeName>
        <fullName evidence="8">NnkPLA-I</fullName>
    </alternativeName>
    <alternativeName>
        <fullName>Phosphatidylcholine 2-acylhydrolase</fullName>
    </alternativeName>
</protein>
<proteinExistence type="evidence at protein level"/>
<sequence>MNPAHLLILAAVCVSPLGAFSNRPMPLNLYQFKNMIQCTVPNRSWWDFADYGCYCGRGGSGTPVDDLDRCCQVHDNCYNEAEKISRCWPYFKTYSYECSQGTLTCKGDNDACAAAVCDCDRLAAICFAGAPYNNNNYNIDLKARCQ</sequence>
<dbReference type="EC" id="3.1.1.4"/>
<dbReference type="EMBL" id="AB011388">
    <property type="protein sequence ID" value="BAA36403.1"/>
    <property type="molecule type" value="mRNA"/>
</dbReference>
<dbReference type="SMR" id="P00596"/>
<dbReference type="BRENDA" id="3.1.1.4">
    <property type="organism ID" value="6939"/>
</dbReference>
<dbReference type="GO" id="GO:0005576">
    <property type="term" value="C:extracellular region"/>
    <property type="evidence" value="ECO:0007669"/>
    <property type="project" value="UniProtKB-SubCell"/>
</dbReference>
<dbReference type="GO" id="GO:0030550">
    <property type="term" value="F:acetylcholine receptor inhibitor activity"/>
    <property type="evidence" value="ECO:0007669"/>
    <property type="project" value="UniProtKB-KW"/>
</dbReference>
<dbReference type="GO" id="GO:0005509">
    <property type="term" value="F:calcium ion binding"/>
    <property type="evidence" value="ECO:0007669"/>
    <property type="project" value="InterPro"/>
</dbReference>
<dbReference type="GO" id="GO:0047498">
    <property type="term" value="F:calcium-dependent phospholipase A2 activity"/>
    <property type="evidence" value="ECO:0007669"/>
    <property type="project" value="TreeGrafter"/>
</dbReference>
<dbReference type="GO" id="GO:0005543">
    <property type="term" value="F:phospholipid binding"/>
    <property type="evidence" value="ECO:0007669"/>
    <property type="project" value="TreeGrafter"/>
</dbReference>
<dbReference type="GO" id="GO:0005102">
    <property type="term" value="F:signaling receptor binding"/>
    <property type="evidence" value="ECO:0007669"/>
    <property type="project" value="TreeGrafter"/>
</dbReference>
<dbReference type="GO" id="GO:0090729">
    <property type="term" value="F:toxin activity"/>
    <property type="evidence" value="ECO:0007669"/>
    <property type="project" value="UniProtKB-KW"/>
</dbReference>
<dbReference type="GO" id="GO:0050482">
    <property type="term" value="P:arachidonate secretion"/>
    <property type="evidence" value="ECO:0007669"/>
    <property type="project" value="InterPro"/>
</dbReference>
<dbReference type="GO" id="GO:0006633">
    <property type="term" value="P:fatty acid biosynthetic process"/>
    <property type="evidence" value="ECO:0007669"/>
    <property type="project" value="TreeGrafter"/>
</dbReference>
<dbReference type="GO" id="GO:0016042">
    <property type="term" value="P:lipid catabolic process"/>
    <property type="evidence" value="ECO:0007669"/>
    <property type="project" value="UniProtKB-KW"/>
</dbReference>
<dbReference type="GO" id="GO:0006644">
    <property type="term" value="P:phospholipid metabolic process"/>
    <property type="evidence" value="ECO:0007669"/>
    <property type="project" value="InterPro"/>
</dbReference>
<dbReference type="GO" id="GO:0048146">
    <property type="term" value="P:positive regulation of fibroblast proliferation"/>
    <property type="evidence" value="ECO:0007669"/>
    <property type="project" value="TreeGrafter"/>
</dbReference>
<dbReference type="CDD" id="cd00125">
    <property type="entry name" value="PLA2c"/>
    <property type="match status" value="1"/>
</dbReference>
<dbReference type="FunFam" id="1.20.90.10:FF:000007">
    <property type="entry name" value="Acidic phospholipase A2"/>
    <property type="match status" value="1"/>
</dbReference>
<dbReference type="Gene3D" id="1.20.90.10">
    <property type="entry name" value="Phospholipase A2 domain"/>
    <property type="match status" value="1"/>
</dbReference>
<dbReference type="InterPro" id="IPR001211">
    <property type="entry name" value="PLipase_A2"/>
</dbReference>
<dbReference type="InterPro" id="IPR033112">
    <property type="entry name" value="PLipase_A2_Asp_AS"/>
</dbReference>
<dbReference type="InterPro" id="IPR016090">
    <property type="entry name" value="PLipase_A2_dom"/>
</dbReference>
<dbReference type="InterPro" id="IPR036444">
    <property type="entry name" value="PLipase_A2_dom_sf"/>
</dbReference>
<dbReference type="InterPro" id="IPR033113">
    <property type="entry name" value="PLipase_A2_His_AS"/>
</dbReference>
<dbReference type="PANTHER" id="PTHR11716:SF94">
    <property type="entry name" value="PHOSPHOLIPASE A2"/>
    <property type="match status" value="1"/>
</dbReference>
<dbReference type="PANTHER" id="PTHR11716">
    <property type="entry name" value="PHOSPHOLIPASE A2 FAMILY MEMBER"/>
    <property type="match status" value="1"/>
</dbReference>
<dbReference type="Pfam" id="PF00068">
    <property type="entry name" value="Phospholip_A2_1"/>
    <property type="match status" value="1"/>
</dbReference>
<dbReference type="PRINTS" id="PR00389">
    <property type="entry name" value="PHPHLIPASEA2"/>
</dbReference>
<dbReference type="SMART" id="SM00085">
    <property type="entry name" value="PA2c"/>
    <property type="match status" value="1"/>
</dbReference>
<dbReference type="SUPFAM" id="SSF48619">
    <property type="entry name" value="Phospholipase A2, PLA2"/>
    <property type="match status" value="1"/>
</dbReference>
<dbReference type="PROSITE" id="PS00119">
    <property type="entry name" value="PA2_ASP"/>
    <property type="match status" value="1"/>
</dbReference>
<dbReference type="PROSITE" id="PS00118">
    <property type="entry name" value="PA2_HIS"/>
    <property type="match status" value="1"/>
</dbReference>
<comment type="function">
    <text evidence="6 11">PLA2 catalyzes the calcium-dependent hydrolysis of the 2-acyl groups in 3-sn-phosphoglycerides (Probable). Is able to suppress the acetylcholine (ACh)-evoked current mediated by alpha-7 (CHRNA7)-similar nAChRs in L.stagnalis neurons (IC(50)=37 nM) and to compete with alpha-bungarotoxin for binding to muscle- and alpha-7 neuronal nAChR types, as well as to AChBPs (PubMed:25522251). In inhibition of alpha-bungarotoxin binding, this toxin is similarly active against T.californica nAChR (IC(50)=1.2 uM), human alpha-7 nAChR (IC(50)=3.2 uM), and L.stagnalis AChBP (IC(50)=1.0 uM), whereas it is not active against A.californica AChBP (IC(50)&gt;100 uM) (PubMed:25522251).</text>
</comment>
<comment type="catalytic activity">
    <reaction evidence="3 4">
        <text>a 1,2-diacyl-sn-glycero-3-phosphocholine + H2O = a 1-acyl-sn-glycero-3-phosphocholine + a fatty acid + H(+)</text>
        <dbReference type="Rhea" id="RHEA:15801"/>
        <dbReference type="ChEBI" id="CHEBI:15377"/>
        <dbReference type="ChEBI" id="CHEBI:15378"/>
        <dbReference type="ChEBI" id="CHEBI:28868"/>
        <dbReference type="ChEBI" id="CHEBI:57643"/>
        <dbReference type="ChEBI" id="CHEBI:58168"/>
        <dbReference type="EC" id="3.1.1.4"/>
    </reaction>
</comment>
<comment type="cofactor">
    <cofactor evidence="1">
        <name>Ca(2+)</name>
        <dbReference type="ChEBI" id="CHEBI:29108"/>
    </cofactor>
    <text evidence="1">Binds 1 Ca(2+) ion.</text>
</comment>
<comment type="biophysicochemical properties">
    <kinetics>
        <Vmax evidence="5">165.0 umol/min/mg enzyme</Vmax>
    </kinetics>
</comment>
<comment type="subcellular location">
    <subcellularLocation>
        <location evidence="7">Secreted</location>
    </subcellularLocation>
</comment>
<comment type="tissue specificity">
    <text evidence="13">Expressed by the venom gland.</text>
</comment>
<comment type="toxic dose">
    <text>LD(50) is 10 mg/kg by intravenous injection.</text>
</comment>
<comment type="similarity">
    <text evidence="11">Belongs to the phospholipase A2 family. Group I subfamily. D49 sub-subfamily.</text>
</comment>
<reference key="1">
    <citation type="journal article" date="2000" name="Toxicon">
        <title>Regional and accelerated molecular evolution in group I snake venom gland phospholipase A2 isozymes.</title>
        <authorList>
            <person name="Chuman Y."/>
            <person name="Nobuhisa I."/>
            <person name="Ogawa T."/>
            <person name="Deshimaru M."/>
            <person name="Chijiwa T."/>
            <person name="Tan N.-T."/>
            <person name="Fukumaki Y."/>
            <person name="Shimohigashi Y."/>
            <person name="Ducancel F."/>
            <person name="Boulain J.-C."/>
            <person name="Menez A."/>
            <person name="Ohno M."/>
        </authorList>
    </citation>
    <scope>NUCLEOTIDE SEQUENCE [MRNA]</scope>
    <source>
        <tissue>Venom gland</tissue>
    </source>
</reference>
<reference key="2">
    <citation type="journal article" date="1980" name="Eur. J. Biochem.">
        <title>Purification, some properties and amino-acid sequences of two phospholipases A (CM-II and CM-III) from Naja naja kaouthia venom.</title>
        <authorList>
            <person name="Joubert F.J."/>
            <person name="Taljaard N."/>
        </authorList>
    </citation>
    <scope>PROTEIN SEQUENCE OF 28-146</scope>
    <scope>SUBCELLULAR LOCATION</scope>
    <source>
        <tissue>Venom</tissue>
    </source>
</reference>
<reference key="3">
    <citation type="journal article" date="2010" name="Toxicon">
        <title>A new type of thrombin inhibitor, noncytotoxic phospholipase A2, from the Naja haje cobra venom.</title>
        <authorList>
            <person name="Osipov A.V."/>
            <person name="Filkin S.Y."/>
            <person name="Makarova Y.V."/>
            <person name="Tsetlin V.I."/>
            <person name="Utkin Y.N."/>
        </authorList>
    </citation>
    <scope>CATALYTIC ACTIVITY</scope>
    <scope>BIOPHYSICOCHEMICAL PROPERTIES</scope>
</reference>
<reference key="4">
    <citation type="journal article" date="2014" name="PLoS ONE">
        <title>Inhibition of nicotinic acetylcholine receptors, a novel facet in the pleiotropic activities of snake venom phospholipases A2.</title>
        <authorList>
            <person name="Vulfius C.A."/>
            <person name="Kasheverov I.E."/>
            <person name="Starkov V.G."/>
            <person name="Osipov A.V."/>
            <person name="Andreeva T.V."/>
            <person name="Filkin S.Y."/>
            <person name="Gorbacheva E.V."/>
            <person name="Astashev M.E."/>
            <person name="Tsetlin V.I."/>
            <person name="Utkin Y.N."/>
        </authorList>
    </citation>
    <scope>FUNCTION</scope>
    <source>
        <tissue>Venom</tissue>
    </source>
</reference>
<keyword id="KW-0008">Acetylcholine receptor inhibiting toxin</keyword>
<keyword id="KW-0106">Calcium</keyword>
<keyword id="KW-0903">Direct protein sequencing</keyword>
<keyword id="KW-1015">Disulfide bond</keyword>
<keyword id="KW-0378">Hydrolase</keyword>
<keyword id="KW-0442">Lipid degradation</keyword>
<keyword id="KW-0443">Lipid metabolism</keyword>
<keyword id="KW-0479">Metal-binding</keyword>
<keyword id="KW-0528">Neurotoxin</keyword>
<keyword id="KW-0629">Postsynaptic neurotoxin</keyword>
<keyword id="KW-0964">Secreted</keyword>
<keyword id="KW-0732">Signal</keyword>
<keyword id="KW-0800">Toxin</keyword>
<organism>
    <name type="scientific">Naja kaouthia</name>
    <name type="common">Monocled cobra</name>
    <name type="synonym">Naja siamensis</name>
    <dbReference type="NCBI Taxonomy" id="8649"/>
    <lineage>
        <taxon>Eukaryota</taxon>
        <taxon>Metazoa</taxon>
        <taxon>Chordata</taxon>
        <taxon>Craniata</taxon>
        <taxon>Vertebrata</taxon>
        <taxon>Euteleostomi</taxon>
        <taxon>Lepidosauria</taxon>
        <taxon>Squamata</taxon>
        <taxon>Bifurcata</taxon>
        <taxon>Unidentata</taxon>
        <taxon>Episquamata</taxon>
        <taxon>Toxicofera</taxon>
        <taxon>Serpentes</taxon>
        <taxon>Colubroidea</taxon>
        <taxon>Elapidae</taxon>
        <taxon>Elapinae</taxon>
        <taxon>Naja</taxon>
    </lineage>
</organism>
<feature type="signal peptide" evidence="2">
    <location>
        <begin position="1"/>
        <end position="21"/>
    </location>
</feature>
<feature type="propeptide" id="PRO_0000022920" evidence="7">
    <location>
        <begin position="22"/>
        <end position="27"/>
    </location>
</feature>
<feature type="chain" id="PRO_0000022921" description="Acidic phospholipase A2 CM-II">
    <location>
        <begin position="28"/>
        <end position="146"/>
    </location>
</feature>
<feature type="active site" evidence="1">
    <location>
        <position position="74"/>
    </location>
</feature>
<feature type="active site" evidence="1">
    <location>
        <position position="120"/>
    </location>
</feature>
<feature type="binding site" evidence="1">
    <location>
        <position position="54"/>
    </location>
    <ligand>
        <name>Ca(2+)</name>
        <dbReference type="ChEBI" id="CHEBI:29108"/>
    </ligand>
</feature>
<feature type="binding site" evidence="1">
    <location>
        <position position="56"/>
    </location>
    <ligand>
        <name>Ca(2+)</name>
        <dbReference type="ChEBI" id="CHEBI:29108"/>
    </ligand>
</feature>
<feature type="binding site" evidence="1">
    <location>
        <position position="58"/>
    </location>
    <ligand>
        <name>Ca(2+)</name>
        <dbReference type="ChEBI" id="CHEBI:29108"/>
    </ligand>
</feature>
<feature type="binding site" evidence="1">
    <location>
        <position position="75"/>
    </location>
    <ligand>
        <name>Ca(2+)</name>
        <dbReference type="ChEBI" id="CHEBI:29108"/>
    </ligand>
</feature>
<feature type="disulfide bond" evidence="1">
    <location>
        <begin position="38"/>
        <end position="98"/>
    </location>
</feature>
<feature type="disulfide bond" evidence="1">
    <location>
        <begin position="53"/>
        <end position="145"/>
    </location>
</feature>
<feature type="disulfide bond" evidence="1">
    <location>
        <begin position="55"/>
        <end position="71"/>
    </location>
</feature>
<feature type="disulfide bond" evidence="1">
    <location>
        <begin position="70"/>
        <end position="126"/>
    </location>
</feature>
<feature type="disulfide bond" evidence="1">
    <location>
        <begin position="77"/>
        <end position="119"/>
    </location>
</feature>
<feature type="disulfide bond" evidence="1">
    <location>
        <begin position="87"/>
        <end position="112"/>
    </location>
</feature>
<feature type="disulfide bond" evidence="1">
    <location>
        <begin position="105"/>
        <end position="117"/>
    </location>
</feature>
<feature type="sequence conflict" description="In Ref. 2; AA sequence." evidence="12" ref="2">
    <original>N</original>
    <variation>D</variation>
    <location>
        <position position="79"/>
    </location>
</feature>
<feature type="sequence conflict" description="In Ref. 2; AA sequence." evidence="12" ref="2">
    <original>GDND</original>
    <variation>NGNN</variation>
    <location>
        <begin position="107"/>
        <end position="110"/>
    </location>
</feature>
<accession>P00596</accession>
<accession>Q9PWS2</accession>